<accession>C0ME76</accession>
<protein>
    <recommendedName>
        <fullName evidence="2">Large ribosomal subunit protein bL27</fullName>
    </recommendedName>
    <alternativeName>
        <fullName evidence="4">50S ribosomal protein L27</fullName>
    </alternativeName>
</protein>
<feature type="propeptide" id="PRO_0000459948" evidence="1">
    <location>
        <begin position="1"/>
        <end position="12"/>
    </location>
</feature>
<feature type="chain" id="PRO_1000211941" description="Large ribosomal subunit protein bL27">
    <location>
        <begin position="13"/>
        <end position="97"/>
    </location>
</feature>
<feature type="region of interest" description="Disordered" evidence="3">
    <location>
        <begin position="1"/>
        <end position="38"/>
    </location>
</feature>
<feature type="compositionally biased region" description="Polar residues" evidence="3">
    <location>
        <begin position="1"/>
        <end position="10"/>
    </location>
</feature>
<comment type="PTM">
    <text evidence="1">The N-terminus is cleaved by ribosomal processing cysteine protease Prp.</text>
</comment>
<comment type="similarity">
    <text evidence="2">Belongs to the bacterial ribosomal protein bL27 family.</text>
</comment>
<name>RL27_STRS7</name>
<sequence length="97" mass="10426">MVKLNLSNLQHFAHKKGGGSTSNGRDSQAKRLGAKAADGQTVSGGSILYRQRGTHIYPGVNVGRGGDDTLFAKVEGVVRFERKGRDKKQVSVYPIAK</sequence>
<proteinExistence type="inferred from homology"/>
<organism>
    <name type="scientific">Streptococcus equi subsp. zooepidemicus (strain H70)</name>
    <dbReference type="NCBI Taxonomy" id="553483"/>
    <lineage>
        <taxon>Bacteria</taxon>
        <taxon>Bacillati</taxon>
        <taxon>Bacillota</taxon>
        <taxon>Bacilli</taxon>
        <taxon>Lactobacillales</taxon>
        <taxon>Streptococcaceae</taxon>
        <taxon>Streptococcus</taxon>
    </lineage>
</organism>
<keyword id="KW-0687">Ribonucleoprotein</keyword>
<keyword id="KW-0689">Ribosomal protein</keyword>
<reference key="1">
    <citation type="journal article" date="2009" name="PLoS Pathog.">
        <title>Genomic evidence for the evolution of Streptococcus equi: host restriction, increased virulence, and genetic exchange with human pathogens.</title>
        <authorList>
            <person name="Holden M.T.G."/>
            <person name="Heather Z."/>
            <person name="Paillot R."/>
            <person name="Steward K.F."/>
            <person name="Webb K."/>
            <person name="Ainslie F."/>
            <person name="Jourdan T."/>
            <person name="Bason N.C."/>
            <person name="Holroyd N.E."/>
            <person name="Mungall K."/>
            <person name="Quail M.A."/>
            <person name="Sanders M."/>
            <person name="Simmonds M."/>
            <person name="Willey D."/>
            <person name="Brooks K."/>
            <person name="Aanensen D.M."/>
            <person name="Spratt B.G."/>
            <person name="Jolley K.A."/>
            <person name="Maiden M.C.J."/>
            <person name="Kehoe M."/>
            <person name="Chanter N."/>
            <person name="Bentley S.D."/>
            <person name="Robinson C."/>
            <person name="Maskell D.J."/>
            <person name="Parkhill J."/>
            <person name="Waller A.S."/>
        </authorList>
    </citation>
    <scope>NUCLEOTIDE SEQUENCE [LARGE SCALE GENOMIC DNA]</scope>
    <source>
        <strain>H70</strain>
    </source>
</reference>
<gene>
    <name evidence="2" type="primary">rpmA</name>
    <name type="ordered locus">SZO_08390</name>
</gene>
<dbReference type="EMBL" id="FM204884">
    <property type="protein sequence ID" value="CAW99029.1"/>
    <property type="molecule type" value="Genomic_DNA"/>
</dbReference>
<dbReference type="SMR" id="C0ME76"/>
<dbReference type="KEGG" id="seq:SZO_08390"/>
<dbReference type="eggNOG" id="COG0211">
    <property type="taxonomic scope" value="Bacteria"/>
</dbReference>
<dbReference type="HOGENOM" id="CLU_095424_4_0_9"/>
<dbReference type="Proteomes" id="UP000001368">
    <property type="component" value="Chromosome"/>
</dbReference>
<dbReference type="GO" id="GO:0022625">
    <property type="term" value="C:cytosolic large ribosomal subunit"/>
    <property type="evidence" value="ECO:0007669"/>
    <property type="project" value="TreeGrafter"/>
</dbReference>
<dbReference type="GO" id="GO:0003735">
    <property type="term" value="F:structural constituent of ribosome"/>
    <property type="evidence" value="ECO:0007669"/>
    <property type="project" value="InterPro"/>
</dbReference>
<dbReference type="GO" id="GO:0006412">
    <property type="term" value="P:translation"/>
    <property type="evidence" value="ECO:0007669"/>
    <property type="project" value="UniProtKB-UniRule"/>
</dbReference>
<dbReference type="FunFam" id="2.40.50.100:FF:000004">
    <property type="entry name" value="50S ribosomal protein L27"/>
    <property type="match status" value="1"/>
</dbReference>
<dbReference type="Gene3D" id="2.40.50.100">
    <property type="match status" value="1"/>
</dbReference>
<dbReference type="HAMAP" id="MF_00539">
    <property type="entry name" value="Ribosomal_bL27"/>
    <property type="match status" value="1"/>
</dbReference>
<dbReference type="InterPro" id="IPR001684">
    <property type="entry name" value="Ribosomal_bL27"/>
</dbReference>
<dbReference type="InterPro" id="IPR018261">
    <property type="entry name" value="Ribosomal_bL27_CS"/>
</dbReference>
<dbReference type="NCBIfam" id="TIGR00062">
    <property type="entry name" value="L27"/>
    <property type="match status" value="1"/>
</dbReference>
<dbReference type="PANTHER" id="PTHR15893:SF0">
    <property type="entry name" value="LARGE RIBOSOMAL SUBUNIT PROTEIN BL27M"/>
    <property type="match status" value="1"/>
</dbReference>
<dbReference type="PANTHER" id="PTHR15893">
    <property type="entry name" value="RIBOSOMAL PROTEIN L27"/>
    <property type="match status" value="1"/>
</dbReference>
<dbReference type="Pfam" id="PF01016">
    <property type="entry name" value="Ribosomal_L27"/>
    <property type="match status" value="1"/>
</dbReference>
<dbReference type="PRINTS" id="PR00063">
    <property type="entry name" value="RIBOSOMALL27"/>
</dbReference>
<dbReference type="SUPFAM" id="SSF110324">
    <property type="entry name" value="Ribosomal L27 protein-like"/>
    <property type="match status" value="1"/>
</dbReference>
<dbReference type="PROSITE" id="PS00831">
    <property type="entry name" value="RIBOSOMAL_L27"/>
    <property type="match status" value="1"/>
</dbReference>
<evidence type="ECO:0000250" key="1">
    <source>
        <dbReference type="UniProtKB" id="Q2FXT0"/>
    </source>
</evidence>
<evidence type="ECO:0000255" key="2">
    <source>
        <dbReference type="HAMAP-Rule" id="MF_00539"/>
    </source>
</evidence>
<evidence type="ECO:0000256" key="3">
    <source>
        <dbReference type="SAM" id="MobiDB-lite"/>
    </source>
</evidence>
<evidence type="ECO:0000305" key="4"/>